<evidence type="ECO:0000255" key="1">
    <source>
        <dbReference type="HAMAP-Rule" id="MF_00199"/>
    </source>
</evidence>
<evidence type="ECO:0000305" key="2"/>
<name>APAH_LEGPH</name>
<comment type="function">
    <text evidence="1">Hydrolyzes diadenosine 5',5'''-P1,P4-tetraphosphate to yield ADP.</text>
</comment>
<comment type="catalytic activity">
    <reaction evidence="1">
        <text>P(1),P(4)-bis(5'-adenosyl) tetraphosphate + H2O = 2 ADP + 2 H(+)</text>
        <dbReference type="Rhea" id="RHEA:24252"/>
        <dbReference type="ChEBI" id="CHEBI:15377"/>
        <dbReference type="ChEBI" id="CHEBI:15378"/>
        <dbReference type="ChEBI" id="CHEBI:58141"/>
        <dbReference type="ChEBI" id="CHEBI:456216"/>
        <dbReference type="EC" id="3.6.1.41"/>
    </reaction>
</comment>
<comment type="similarity">
    <text evidence="1">Belongs to the Ap4A hydrolase family.</text>
</comment>
<comment type="sequence caution" evidence="2">
    <conflict type="erroneous initiation">
        <sequence resource="EMBL-CDS" id="AAU28972"/>
    </conflict>
</comment>
<organism>
    <name type="scientific">Legionella pneumophila subsp. pneumophila (strain Philadelphia 1 / ATCC 33152 / DSM 7513)</name>
    <dbReference type="NCBI Taxonomy" id="272624"/>
    <lineage>
        <taxon>Bacteria</taxon>
        <taxon>Pseudomonadati</taxon>
        <taxon>Pseudomonadota</taxon>
        <taxon>Gammaproteobacteria</taxon>
        <taxon>Legionellales</taxon>
        <taxon>Legionellaceae</taxon>
        <taxon>Legionella</taxon>
    </lineage>
</organism>
<reference key="1">
    <citation type="journal article" date="2004" name="Science">
        <title>The genomic sequence of the accidental pathogen Legionella pneumophila.</title>
        <authorList>
            <person name="Chien M."/>
            <person name="Morozova I."/>
            <person name="Shi S."/>
            <person name="Sheng H."/>
            <person name="Chen J."/>
            <person name="Gomez S.M."/>
            <person name="Asamani G."/>
            <person name="Hill K."/>
            <person name="Nuara J."/>
            <person name="Feder M."/>
            <person name="Rineer J."/>
            <person name="Greenberg J.J."/>
            <person name="Steshenko V."/>
            <person name="Park S.H."/>
            <person name="Zhao B."/>
            <person name="Teplitskaya E."/>
            <person name="Edwards J.R."/>
            <person name="Pampou S."/>
            <person name="Georghiou A."/>
            <person name="Chou I.-C."/>
            <person name="Iannuccilli W."/>
            <person name="Ulz M.E."/>
            <person name="Kim D.H."/>
            <person name="Geringer-Sameth A."/>
            <person name="Goldsberry C."/>
            <person name="Morozov P."/>
            <person name="Fischer S.G."/>
            <person name="Segal G."/>
            <person name="Qu X."/>
            <person name="Rzhetsky A."/>
            <person name="Zhang P."/>
            <person name="Cayanis E."/>
            <person name="De Jong P.J."/>
            <person name="Ju J."/>
            <person name="Kalachikov S."/>
            <person name="Shuman H.A."/>
            <person name="Russo J.J."/>
        </authorList>
    </citation>
    <scope>NUCLEOTIDE SEQUENCE [LARGE SCALE GENOMIC DNA]</scope>
    <source>
        <strain>Philadelphia 1 / ATCC 33152 / DSM 7513</strain>
    </source>
</reference>
<accession>Q5ZRF6</accession>
<feature type="chain" id="PRO_0000197996" description="Bis(5'-nucleosyl)-tetraphosphatase, symmetrical">
    <location>
        <begin position="1"/>
        <end position="276"/>
    </location>
</feature>
<keyword id="KW-0378">Hydrolase</keyword>
<keyword id="KW-1185">Reference proteome</keyword>
<sequence length="276" mass="31453">MPDYAIGDVQGCYDPLQRLLELIDFNEKEDCLWFVGDLVNRGPDSLAVLRFIYSLPVKPKITLGNHDLHLLGLLFGGQPWKGHDDTLEEVMLADDGEELGHWLRKQSLLCRSSELNIVMCHAGIAPLWDLSKAMDLANELEAVLSGDSYHEFFAQMYGNKPDIWSDDLVGLDRLRVITNYFTRMRYCDAHGRLDLGYKGTLSKAPNHLYPWFEVPCRKEIEMDIVFGHWAALMGRSSHPRIHAIDTGCLWGGQLTALRLQDRQRFSVPGYGVSRFE</sequence>
<protein>
    <recommendedName>
        <fullName evidence="1">Bis(5'-nucleosyl)-tetraphosphatase, symmetrical</fullName>
        <ecNumber evidence="1">3.6.1.41</ecNumber>
    </recommendedName>
    <alternativeName>
        <fullName evidence="1">Ap4A hydrolase</fullName>
    </alternativeName>
    <alternativeName>
        <fullName evidence="1">Diadenosine 5',5'''-P1,P4-tetraphosphate pyrophosphohydrolase</fullName>
    </alternativeName>
    <alternativeName>
        <fullName evidence="1">Diadenosine tetraphosphatase</fullName>
    </alternativeName>
</protein>
<proteinExistence type="inferred from homology"/>
<dbReference type="EC" id="3.6.1.41" evidence="1"/>
<dbReference type="EMBL" id="AE017354">
    <property type="protein sequence ID" value="AAU28972.1"/>
    <property type="status" value="ALT_INIT"/>
    <property type="molecule type" value="Genomic_DNA"/>
</dbReference>
<dbReference type="RefSeq" id="WP_015443884.1">
    <property type="nucleotide sequence ID" value="NC_002942.5"/>
</dbReference>
<dbReference type="RefSeq" id="YP_096919.1">
    <property type="nucleotide sequence ID" value="NC_002942.5"/>
</dbReference>
<dbReference type="SMR" id="Q5ZRF6"/>
<dbReference type="STRING" id="272624.lpg2926"/>
<dbReference type="PaxDb" id="272624-lpg2926"/>
<dbReference type="KEGG" id="lpn:lpg2926"/>
<dbReference type="PATRIC" id="fig|272624.6.peg.3124"/>
<dbReference type="eggNOG" id="COG0639">
    <property type="taxonomic scope" value="Bacteria"/>
</dbReference>
<dbReference type="HOGENOM" id="CLU_056184_2_0_6"/>
<dbReference type="OrthoDB" id="9807890at2"/>
<dbReference type="Proteomes" id="UP000000609">
    <property type="component" value="Chromosome"/>
</dbReference>
<dbReference type="GO" id="GO:0008803">
    <property type="term" value="F:bis(5'-nucleosyl)-tetraphosphatase (symmetrical) activity"/>
    <property type="evidence" value="ECO:0007669"/>
    <property type="project" value="UniProtKB-UniRule"/>
</dbReference>
<dbReference type="CDD" id="cd07422">
    <property type="entry name" value="MPP_ApaH"/>
    <property type="match status" value="1"/>
</dbReference>
<dbReference type="Gene3D" id="3.60.21.10">
    <property type="match status" value="1"/>
</dbReference>
<dbReference type="HAMAP" id="MF_00199">
    <property type="entry name" value="ApaH"/>
    <property type="match status" value="1"/>
</dbReference>
<dbReference type="InterPro" id="IPR004617">
    <property type="entry name" value="ApaH"/>
</dbReference>
<dbReference type="InterPro" id="IPR004843">
    <property type="entry name" value="Calcineurin-like_PHP_ApaH"/>
</dbReference>
<dbReference type="InterPro" id="IPR029052">
    <property type="entry name" value="Metallo-depent_PP-like"/>
</dbReference>
<dbReference type="NCBIfam" id="TIGR00668">
    <property type="entry name" value="apaH"/>
    <property type="match status" value="1"/>
</dbReference>
<dbReference type="NCBIfam" id="NF001204">
    <property type="entry name" value="PRK00166.1"/>
    <property type="match status" value="1"/>
</dbReference>
<dbReference type="PANTHER" id="PTHR40942">
    <property type="match status" value="1"/>
</dbReference>
<dbReference type="PANTHER" id="PTHR40942:SF4">
    <property type="entry name" value="CYTOCHROME C5"/>
    <property type="match status" value="1"/>
</dbReference>
<dbReference type="Pfam" id="PF00149">
    <property type="entry name" value="Metallophos"/>
    <property type="match status" value="1"/>
</dbReference>
<dbReference type="PIRSF" id="PIRSF000903">
    <property type="entry name" value="B5n-ttraPtase_sm"/>
    <property type="match status" value="1"/>
</dbReference>
<dbReference type="SUPFAM" id="SSF56300">
    <property type="entry name" value="Metallo-dependent phosphatases"/>
    <property type="match status" value="1"/>
</dbReference>
<gene>
    <name evidence="1" type="primary">apaH</name>
    <name type="ordered locus">lpg2926</name>
</gene>